<protein>
    <recommendedName>
        <fullName>Aspartate-rich protein 1</fullName>
    </recommendedName>
</protein>
<keyword id="KW-1267">Proteomics identification</keyword>
<keyword id="KW-1185">Reference proteome</keyword>
<reference key="1">
    <citation type="journal article" date="2004" name="Genome Biol.">
        <title>A genome annotation-driven approach to cloning the human ORFeome.</title>
        <authorList>
            <person name="Collins J.E."/>
            <person name="Wright C.L."/>
            <person name="Edwards C.A."/>
            <person name="Davis M.P."/>
            <person name="Grinham J.A."/>
            <person name="Cole C.G."/>
            <person name="Goward M.E."/>
            <person name="Aguado B."/>
            <person name="Mallya M."/>
            <person name="Mokrab Y."/>
            <person name="Huckle E.J."/>
            <person name="Beare D.M."/>
            <person name="Dunham I."/>
        </authorList>
    </citation>
    <scope>NUCLEOTIDE SEQUENCE [LARGE SCALE MRNA]</scope>
</reference>
<reference key="2">
    <citation type="journal article" date="2007" name="BMC Genomics">
        <title>The full-ORF clone resource of the German cDNA consortium.</title>
        <authorList>
            <person name="Bechtel S."/>
            <person name="Rosenfelder H."/>
            <person name="Duda A."/>
            <person name="Schmidt C.P."/>
            <person name="Ernst U."/>
            <person name="Wellenreuther R."/>
            <person name="Mehrle A."/>
            <person name="Schuster C."/>
            <person name="Bahr A."/>
            <person name="Bloecker H."/>
            <person name="Heubner D."/>
            <person name="Hoerlein A."/>
            <person name="Michel G."/>
            <person name="Wedler H."/>
            <person name="Koehrer K."/>
            <person name="Ottenwaelder B."/>
            <person name="Poustka A."/>
            <person name="Wiemann S."/>
            <person name="Schupp I."/>
        </authorList>
    </citation>
    <scope>NUCLEOTIDE SEQUENCE [LARGE SCALE MRNA]</scope>
    <source>
        <tissue>Testis</tissue>
    </source>
</reference>
<reference key="3">
    <citation type="journal article" date="1999" name="Nature">
        <title>The DNA sequence of human chromosome 22.</title>
        <authorList>
            <person name="Dunham I."/>
            <person name="Hunt A.R."/>
            <person name="Collins J.E."/>
            <person name="Bruskiewich R."/>
            <person name="Beare D.M."/>
            <person name="Clamp M."/>
            <person name="Smink L.J."/>
            <person name="Ainscough R."/>
            <person name="Almeida J.P."/>
            <person name="Babbage A.K."/>
            <person name="Bagguley C."/>
            <person name="Bailey J."/>
            <person name="Barlow K.F."/>
            <person name="Bates K.N."/>
            <person name="Beasley O.P."/>
            <person name="Bird C.P."/>
            <person name="Blakey S.E."/>
            <person name="Bridgeman A.M."/>
            <person name="Buck D."/>
            <person name="Burgess J."/>
            <person name="Burrill W.D."/>
            <person name="Burton J."/>
            <person name="Carder C."/>
            <person name="Carter N.P."/>
            <person name="Chen Y."/>
            <person name="Clark G."/>
            <person name="Clegg S.M."/>
            <person name="Cobley V.E."/>
            <person name="Cole C.G."/>
            <person name="Collier R.E."/>
            <person name="Connor R."/>
            <person name="Conroy D."/>
            <person name="Corby N.R."/>
            <person name="Coville G.J."/>
            <person name="Cox A.V."/>
            <person name="Davis J."/>
            <person name="Dawson E."/>
            <person name="Dhami P.D."/>
            <person name="Dockree C."/>
            <person name="Dodsworth S.J."/>
            <person name="Durbin R.M."/>
            <person name="Ellington A.G."/>
            <person name="Evans K.L."/>
            <person name="Fey J.M."/>
            <person name="Fleming K."/>
            <person name="French L."/>
            <person name="Garner A.A."/>
            <person name="Gilbert J.G.R."/>
            <person name="Goward M.E."/>
            <person name="Grafham D.V."/>
            <person name="Griffiths M.N.D."/>
            <person name="Hall C."/>
            <person name="Hall R.E."/>
            <person name="Hall-Tamlyn G."/>
            <person name="Heathcott R.W."/>
            <person name="Ho S."/>
            <person name="Holmes S."/>
            <person name="Hunt S.E."/>
            <person name="Jones M.C."/>
            <person name="Kershaw J."/>
            <person name="Kimberley A.M."/>
            <person name="King A."/>
            <person name="Laird G.K."/>
            <person name="Langford C.F."/>
            <person name="Leversha M.A."/>
            <person name="Lloyd C."/>
            <person name="Lloyd D.M."/>
            <person name="Martyn I.D."/>
            <person name="Mashreghi-Mohammadi M."/>
            <person name="Matthews L.H."/>
            <person name="Mccann O.T."/>
            <person name="Mcclay J."/>
            <person name="Mclaren S."/>
            <person name="McMurray A.A."/>
            <person name="Milne S.A."/>
            <person name="Mortimore B.J."/>
            <person name="Odell C.N."/>
            <person name="Pavitt R."/>
            <person name="Pearce A.V."/>
            <person name="Pearson D."/>
            <person name="Phillimore B.J.C.T."/>
            <person name="Phillips S.H."/>
            <person name="Plumb R.W."/>
            <person name="Ramsay H."/>
            <person name="Ramsey Y."/>
            <person name="Rogers L."/>
            <person name="Ross M.T."/>
            <person name="Scott C.E."/>
            <person name="Sehra H.K."/>
            <person name="Skuce C.D."/>
            <person name="Smalley S."/>
            <person name="Smith M.L."/>
            <person name="Soderlund C."/>
            <person name="Spragon L."/>
            <person name="Steward C.A."/>
            <person name="Sulston J.E."/>
            <person name="Swann R.M."/>
            <person name="Vaudin M."/>
            <person name="Wall M."/>
            <person name="Wallis J.M."/>
            <person name="Whiteley M.N."/>
            <person name="Willey D.L."/>
            <person name="Williams L."/>
            <person name="Williams S.A."/>
            <person name="Williamson H."/>
            <person name="Wilmer T.E."/>
            <person name="Wilming L."/>
            <person name="Wright C.L."/>
            <person name="Hubbard T."/>
            <person name="Bentley D.R."/>
            <person name="Beck S."/>
            <person name="Rogers J."/>
            <person name="Shimizu N."/>
            <person name="Minoshima S."/>
            <person name="Kawasaki K."/>
            <person name="Sasaki T."/>
            <person name="Asakawa S."/>
            <person name="Kudoh J."/>
            <person name="Shintani A."/>
            <person name="Shibuya K."/>
            <person name="Yoshizaki Y."/>
            <person name="Aoki N."/>
            <person name="Mitsuyama S."/>
            <person name="Roe B.A."/>
            <person name="Chen F."/>
            <person name="Chu L."/>
            <person name="Crabtree J."/>
            <person name="Deschamps S."/>
            <person name="Do A."/>
            <person name="Do T."/>
            <person name="Dorman A."/>
            <person name="Fang F."/>
            <person name="Fu Y."/>
            <person name="Hu P."/>
            <person name="Hua A."/>
            <person name="Kenton S."/>
            <person name="Lai H."/>
            <person name="Lao H.I."/>
            <person name="Lewis J."/>
            <person name="Lewis S."/>
            <person name="Lin S.-P."/>
            <person name="Loh P."/>
            <person name="Malaj E."/>
            <person name="Nguyen T."/>
            <person name="Pan H."/>
            <person name="Phan S."/>
            <person name="Qi S."/>
            <person name="Qian Y."/>
            <person name="Ray L."/>
            <person name="Ren Q."/>
            <person name="Shaull S."/>
            <person name="Sloan D."/>
            <person name="Song L."/>
            <person name="Wang Q."/>
            <person name="Wang Y."/>
            <person name="Wang Z."/>
            <person name="White J."/>
            <person name="Willingham D."/>
            <person name="Wu H."/>
            <person name="Yao Z."/>
            <person name="Zhan M."/>
            <person name="Zhang G."/>
            <person name="Chissoe S."/>
            <person name="Murray J."/>
            <person name="Miller N."/>
            <person name="Minx P."/>
            <person name="Fulton R."/>
            <person name="Johnson D."/>
            <person name="Bemis G."/>
            <person name="Bentley D."/>
            <person name="Bradshaw H."/>
            <person name="Bourne S."/>
            <person name="Cordes M."/>
            <person name="Du Z."/>
            <person name="Fulton L."/>
            <person name="Goela D."/>
            <person name="Graves T."/>
            <person name="Hawkins J."/>
            <person name="Hinds K."/>
            <person name="Kemp K."/>
            <person name="Latreille P."/>
            <person name="Layman D."/>
            <person name="Ozersky P."/>
            <person name="Rohlfing T."/>
            <person name="Scheet P."/>
            <person name="Walker C."/>
            <person name="Wamsley A."/>
            <person name="Wohldmann P."/>
            <person name="Pepin K."/>
            <person name="Nelson J."/>
            <person name="Korf I."/>
            <person name="Bedell J.A."/>
            <person name="Hillier L.W."/>
            <person name="Mardis E."/>
            <person name="Waterston R."/>
            <person name="Wilson R."/>
            <person name="Emanuel B.S."/>
            <person name="Shaikh T."/>
            <person name="Kurahashi H."/>
            <person name="Saitta S."/>
            <person name="Budarf M.L."/>
            <person name="McDermid H.E."/>
            <person name="Johnson A."/>
            <person name="Wong A.C.C."/>
            <person name="Morrow B.E."/>
            <person name="Edelmann L."/>
            <person name="Kim U.J."/>
            <person name="Shizuya H."/>
            <person name="Simon M.I."/>
            <person name="Dumanski J.P."/>
            <person name="Peyrard M."/>
            <person name="Kedra D."/>
            <person name="Seroussi E."/>
            <person name="Fransson I."/>
            <person name="Tapia I."/>
            <person name="Bruder C.E."/>
            <person name="O'Brien K.P."/>
            <person name="Wilkinson P."/>
            <person name="Bodenteich A."/>
            <person name="Hartman K."/>
            <person name="Hu X."/>
            <person name="Khan A.S."/>
            <person name="Lane L."/>
            <person name="Tilahun Y."/>
            <person name="Wright H."/>
        </authorList>
    </citation>
    <scope>NUCLEOTIDE SEQUENCE [LARGE SCALE GENOMIC DNA]</scope>
</reference>
<reference key="4">
    <citation type="journal article" date="2004" name="Genome Res.">
        <title>The status, quality, and expansion of the NIH full-length cDNA project: the Mammalian Gene Collection (MGC).</title>
        <authorList>
            <consortium name="The MGC Project Team"/>
        </authorList>
    </citation>
    <scope>NUCLEOTIDE SEQUENCE [LARGE SCALE MRNA]</scope>
    <source>
        <tissue>Brain</tissue>
    </source>
</reference>
<feature type="chain" id="PRO_0000319592" description="Aspartate-rich protein 1">
    <location>
        <begin position="1"/>
        <end position="229"/>
    </location>
</feature>
<feature type="region of interest" description="Disordered" evidence="1">
    <location>
        <begin position="84"/>
        <end position="106"/>
    </location>
</feature>
<feature type="sequence variant" id="VAR_039014" description="In dbSNP:rs3827318.">
    <original>I</original>
    <variation>T</variation>
    <location>
        <position position="4"/>
    </location>
</feature>
<feature type="sequence conflict" description="In Ref. 1; CAG30256." evidence="2" ref="1">
    <location>
        <position position="120"/>
    </location>
</feature>
<accession>Q6PGQ1</accession>
<accession>Q6ICJ8</accession>
<accession>Q6P4I3</accession>
<accession>Q9NU31</accession>
<name>DRIC1_HUMAN</name>
<evidence type="ECO:0000256" key="1">
    <source>
        <dbReference type="SAM" id="MobiDB-lite"/>
    </source>
</evidence>
<evidence type="ECO:0000305" key="2"/>
<comment type="interaction">
    <interactant intactId="EBI-10253641">
        <id>Q6PGQ1</id>
    </interactant>
    <interactant intactId="EBI-751621">
        <id>P48730</id>
        <label>CSNK1D</label>
    </interactant>
    <organismsDiffer>false</organismsDiffer>
    <experiments>3</experiments>
</comment>
<comment type="interaction">
    <interactant intactId="EBI-10253641">
        <id>Q6PGQ1</id>
    </interactant>
    <interactant intactId="EBI-11045281">
        <id>Q9Y6M4-3</id>
        <label>CSNK1G3</label>
    </interactant>
    <organismsDiffer>false</organismsDiffer>
    <experiments>3</experiments>
</comment>
<comment type="interaction">
    <interactant intactId="EBI-10253641">
        <id>Q6PGQ1</id>
    </interactant>
    <interactant intactId="EBI-746712">
        <id>Q9NPC6</id>
        <label>MYOZ2</label>
    </interactant>
    <organismsDiffer>false</organismsDiffer>
    <experiments>3</experiments>
</comment>
<comment type="interaction">
    <interactant intactId="EBI-10253641">
        <id>Q6PGQ1</id>
    </interactant>
    <interactant intactId="EBI-10313866">
        <id>Q9NUL5</id>
        <label>SHFL</label>
    </interactant>
    <organismsDiffer>false</organismsDiffer>
    <experiments>3</experiments>
</comment>
<comment type="interaction">
    <interactant intactId="EBI-10253641">
        <id>Q6PGQ1</id>
    </interactant>
    <interactant intactId="EBI-11955083">
        <id>Q9NUL5-4</id>
        <label>SHFL</label>
    </interactant>
    <organismsDiffer>false</organismsDiffer>
    <experiments>3</experiments>
</comment>
<comment type="sequence caution" evidence="2">
    <conflict type="miscellaneous discrepancy">
        <sequence resource="EMBL-CDS" id="CAB75693"/>
    </conflict>
    <text>Intron retention.</text>
</comment>
<gene>
    <name type="primary">DRICH1</name>
    <name type="synonym">C22orf43</name>
</gene>
<sequence>MGNILTCCINSHCGWPRGKDAPCYESDTDIYETVAAATSESTTVEPGKLDVGATEGQDLQHISNQKMPTGPPEDRLSLKFLPSSEEDNDDAKILPSPVQGSSEDNLSLVCLPRSEDDDCDDDDDDDAQILPSRVQGGCYRFDSSSCSSEDNLSLVCLPRSEDDDCDDDDDDAQILPSPVQACSEDSLFLRCSLRHKDEEEEDDDDIHITARIESDLTLESLSDEEIHPG</sequence>
<dbReference type="EMBL" id="CR456370">
    <property type="protein sequence ID" value="CAG30256.1"/>
    <property type="molecule type" value="mRNA"/>
</dbReference>
<dbReference type="EMBL" id="AL080197">
    <property type="protein sequence ID" value="CAB75693.1"/>
    <property type="status" value="ALT_SEQ"/>
    <property type="molecule type" value="mRNA"/>
</dbReference>
<dbReference type="EMBL" id="AP000346">
    <property type="status" value="NOT_ANNOTATED_CDS"/>
    <property type="molecule type" value="Genomic_DNA"/>
</dbReference>
<dbReference type="EMBL" id="BC056888">
    <property type="protein sequence ID" value="AAH56888.1"/>
    <property type="molecule type" value="mRNA"/>
</dbReference>
<dbReference type="CCDS" id="CCDS42985.1"/>
<dbReference type="RefSeq" id="NP_057533.2">
    <property type="nucleotide sequence ID" value="NM_016449.4"/>
</dbReference>
<dbReference type="BioGRID" id="119396">
    <property type="interactions" value="11"/>
</dbReference>
<dbReference type="FunCoup" id="Q6PGQ1">
    <property type="interactions" value="4"/>
</dbReference>
<dbReference type="IntAct" id="Q6PGQ1">
    <property type="interactions" value="8"/>
</dbReference>
<dbReference type="STRING" id="9606.ENSP00000316137"/>
<dbReference type="GlyGen" id="Q6PGQ1">
    <property type="glycosylation" value="1 site, 1 O-linked glycan (1 site)"/>
</dbReference>
<dbReference type="iPTMnet" id="Q6PGQ1"/>
<dbReference type="PhosphoSitePlus" id="Q6PGQ1"/>
<dbReference type="BioMuta" id="DRICH1"/>
<dbReference type="DMDM" id="74737656"/>
<dbReference type="MassIVE" id="Q6PGQ1"/>
<dbReference type="PaxDb" id="9606-ENSP00000316137"/>
<dbReference type="PeptideAtlas" id="Q6PGQ1"/>
<dbReference type="ProteomicsDB" id="67119"/>
<dbReference type="Antibodypedia" id="5253">
    <property type="antibodies" value="40 antibodies from 8 providers"/>
</dbReference>
<dbReference type="DNASU" id="51233"/>
<dbReference type="Ensembl" id="ENST00000317749.9">
    <property type="protein sequence ID" value="ENSP00000316137.5"/>
    <property type="gene ID" value="ENSG00000189269.13"/>
</dbReference>
<dbReference type="GeneID" id="51233"/>
<dbReference type="KEGG" id="hsa:51233"/>
<dbReference type="MANE-Select" id="ENST00000317749.9">
    <property type="protein sequence ID" value="ENSP00000316137.5"/>
    <property type="RefSeq nucleotide sequence ID" value="NM_016449.4"/>
    <property type="RefSeq protein sequence ID" value="NP_057533.2"/>
</dbReference>
<dbReference type="UCSC" id="uc002zxf.3">
    <property type="organism name" value="human"/>
</dbReference>
<dbReference type="AGR" id="HGNC:28031"/>
<dbReference type="CTD" id="51233"/>
<dbReference type="GeneCards" id="DRICH1"/>
<dbReference type="HGNC" id="HGNC:28031">
    <property type="gene designation" value="DRICH1"/>
</dbReference>
<dbReference type="HPA" id="ENSG00000189269">
    <property type="expression patterns" value="Tissue enhanced (epididymis, testis)"/>
</dbReference>
<dbReference type="neXtProt" id="NX_Q6PGQ1"/>
<dbReference type="OpenTargets" id="ENSG00000189269"/>
<dbReference type="PharmGKB" id="PA164717092"/>
<dbReference type="VEuPathDB" id="HostDB:ENSG00000189269"/>
<dbReference type="eggNOG" id="ENOG502TEMG">
    <property type="taxonomic scope" value="Eukaryota"/>
</dbReference>
<dbReference type="GeneTree" id="ENSGT00520000056310"/>
<dbReference type="HOGENOM" id="CLU_1389796_0_0_1"/>
<dbReference type="InParanoid" id="Q6PGQ1"/>
<dbReference type="OMA" id="LRCSPRY"/>
<dbReference type="OrthoDB" id="9470582at2759"/>
<dbReference type="PAN-GO" id="Q6PGQ1">
    <property type="GO annotations" value="0 GO annotations based on evolutionary models"/>
</dbReference>
<dbReference type="PhylomeDB" id="Q6PGQ1"/>
<dbReference type="TreeFam" id="TF340710"/>
<dbReference type="PathwayCommons" id="Q6PGQ1"/>
<dbReference type="SignaLink" id="Q6PGQ1"/>
<dbReference type="BioGRID-ORCS" id="51233">
    <property type="hits" value="15 hits in 1090 CRISPR screens"/>
</dbReference>
<dbReference type="ChiTaRS" id="DRICH1">
    <property type="organism name" value="human"/>
</dbReference>
<dbReference type="GenomeRNAi" id="51233"/>
<dbReference type="Pharos" id="Q6PGQ1">
    <property type="development level" value="Tdark"/>
</dbReference>
<dbReference type="PRO" id="PR:Q6PGQ1"/>
<dbReference type="Proteomes" id="UP000005640">
    <property type="component" value="Chromosome 22"/>
</dbReference>
<dbReference type="RNAct" id="Q6PGQ1">
    <property type="molecule type" value="protein"/>
</dbReference>
<dbReference type="Bgee" id="ENSG00000189269">
    <property type="expression patterns" value="Expressed in sperm and 94 other cell types or tissues"/>
</dbReference>
<dbReference type="InterPro" id="IPR042865">
    <property type="entry name" value="DRICH1-like"/>
</dbReference>
<dbReference type="PANTHER" id="PTHR15880">
    <property type="entry name" value="ASPARTATE-RICH PROTEIN 1"/>
    <property type="match status" value="1"/>
</dbReference>
<dbReference type="PANTHER" id="PTHR15880:SF0">
    <property type="entry name" value="ASPARTATE-RICH PROTEIN 1"/>
    <property type="match status" value="1"/>
</dbReference>
<proteinExistence type="evidence at protein level"/>
<organism>
    <name type="scientific">Homo sapiens</name>
    <name type="common">Human</name>
    <dbReference type="NCBI Taxonomy" id="9606"/>
    <lineage>
        <taxon>Eukaryota</taxon>
        <taxon>Metazoa</taxon>
        <taxon>Chordata</taxon>
        <taxon>Craniata</taxon>
        <taxon>Vertebrata</taxon>
        <taxon>Euteleostomi</taxon>
        <taxon>Mammalia</taxon>
        <taxon>Eutheria</taxon>
        <taxon>Euarchontoglires</taxon>
        <taxon>Primates</taxon>
        <taxon>Haplorrhini</taxon>
        <taxon>Catarrhini</taxon>
        <taxon>Hominidae</taxon>
        <taxon>Homo</taxon>
    </lineage>
</organism>